<accession>Q5KXI7</accession>
<dbReference type="EC" id="5.4.2.7" evidence="1"/>
<dbReference type="EMBL" id="BA000043">
    <property type="protein sequence ID" value="BAD76599.1"/>
    <property type="molecule type" value="Genomic_DNA"/>
</dbReference>
<dbReference type="SMR" id="Q5KXI7"/>
<dbReference type="STRING" id="235909.GK2314"/>
<dbReference type="KEGG" id="gka:GK2314"/>
<dbReference type="eggNOG" id="COG1015">
    <property type="taxonomic scope" value="Bacteria"/>
</dbReference>
<dbReference type="HOGENOM" id="CLU_053861_0_0_9"/>
<dbReference type="UniPathway" id="UPA00002">
    <property type="reaction ID" value="UER00467"/>
</dbReference>
<dbReference type="Proteomes" id="UP000001172">
    <property type="component" value="Chromosome"/>
</dbReference>
<dbReference type="GO" id="GO:0005829">
    <property type="term" value="C:cytosol"/>
    <property type="evidence" value="ECO:0007669"/>
    <property type="project" value="TreeGrafter"/>
</dbReference>
<dbReference type="GO" id="GO:0000287">
    <property type="term" value="F:magnesium ion binding"/>
    <property type="evidence" value="ECO:0007669"/>
    <property type="project" value="InterPro"/>
</dbReference>
<dbReference type="GO" id="GO:0030145">
    <property type="term" value="F:manganese ion binding"/>
    <property type="evidence" value="ECO:0007669"/>
    <property type="project" value="UniProtKB-UniRule"/>
</dbReference>
<dbReference type="GO" id="GO:0008973">
    <property type="term" value="F:phosphopentomutase activity"/>
    <property type="evidence" value="ECO:0007669"/>
    <property type="project" value="UniProtKB-UniRule"/>
</dbReference>
<dbReference type="GO" id="GO:0006018">
    <property type="term" value="P:2-deoxyribose 1-phosphate catabolic process"/>
    <property type="evidence" value="ECO:0007669"/>
    <property type="project" value="UniProtKB-UniRule"/>
</dbReference>
<dbReference type="GO" id="GO:0006015">
    <property type="term" value="P:5-phosphoribose 1-diphosphate biosynthetic process"/>
    <property type="evidence" value="ECO:0007669"/>
    <property type="project" value="UniProtKB-UniPathway"/>
</dbReference>
<dbReference type="GO" id="GO:0043094">
    <property type="term" value="P:metabolic compound salvage"/>
    <property type="evidence" value="ECO:0007669"/>
    <property type="project" value="InterPro"/>
</dbReference>
<dbReference type="GO" id="GO:0009117">
    <property type="term" value="P:nucleotide metabolic process"/>
    <property type="evidence" value="ECO:0007669"/>
    <property type="project" value="InterPro"/>
</dbReference>
<dbReference type="CDD" id="cd16009">
    <property type="entry name" value="PPM"/>
    <property type="match status" value="1"/>
</dbReference>
<dbReference type="FunFam" id="3.30.70.1250:FF:000001">
    <property type="entry name" value="Phosphopentomutase"/>
    <property type="match status" value="1"/>
</dbReference>
<dbReference type="Gene3D" id="3.40.720.10">
    <property type="entry name" value="Alkaline Phosphatase, subunit A"/>
    <property type="match status" value="1"/>
</dbReference>
<dbReference type="Gene3D" id="3.30.70.1250">
    <property type="entry name" value="Phosphopentomutase"/>
    <property type="match status" value="1"/>
</dbReference>
<dbReference type="HAMAP" id="MF_00740">
    <property type="entry name" value="Phosphopentomut"/>
    <property type="match status" value="1"/>
</dbReference>
<dbReference type="InterPro" id="IPR017850">
    <property type="entry name" value="Alkaline_phosphatase_core_sf"/>
</dbReference>
<dbReference type="InterPro" id="IPR010045">
    <property type="entry name" value="DeoB"/>
</dbReference>
<dbReference type="InterPro" id="IPR006124">
    <property type="entry name" value="Metalloenzyme"/>
</dbReference>
<dbReference type="InterPro" id="IPR024052">
    <property type="entry name" value="Phosphopentomutase_DeoB_cap_sf"/>
</dbReference>
<dbReference type="NCBIfam" id="TIGR01696">
    <property type="entry name" value="deoB"/>
    <property type="match status" value="1"/>
</dbReference>
<dbReference type="NCBIfam" id="NF003766">
    <property type="entry name" value="PRK05362.1"/>
    <property type="match status" value="1"/>
</dbReference>
<dbReference type="PANTHER" id="PTHR21110">
    <property type="entry name" value="PHOSPHOPENTOMUTASE"/>
    <property type="match status" value="1"/>
</dbReference>
<dbReference type="PANTHER" id="PTHR21110:SF0">
    <property type="entry name" value="PHOSPHOPENTOMUTASE"/>
    <property type="match status" value="1"/>
</dbReference>
<dbReference type="Pfam" id="PF01676">
    <property type="entry name" value="Metalloenzyme"/>
    <property type="match status" value="1"/>
</dbReference>
<dbReference type="PIRSF" id="PIRSF001491">
    <property type="entry name" value="Ppentomutase"/>
    <property type="match status" value="1"/>
</dbReference>
<dbReference type="SUPFAM" id="SSF53649">
    <property type="entry name" value="Alkaline phosphatase-like"/>
    <property type="match status" value="1"/>
</dbReference>
<dbReference type="SUPFAM" id="SSF143856">
    <property type="entry name" value="DeoB insert domain-like"/>
    <property type="match status" value="1"/>
</dbReference>
<proteinExistence type="inferred from homology"/>
<evidence type="ECO:0000255" key="1">
    <source>
        <dbReference type="HAMAP-Rule" id="MF_00740"/>
    </source>
</evidence>
<reference key="1">
    <citation type="journal article" date="2004" name="Nucleic Acids Res.">
        <title>Thermoadaptation trait revealed by the genome sequence of thermophilic Geobacillus kaustophilus.</title>
        <authorList>
            <person name="Takami H."/>
            <person name="Takaki Y."/>
            <person name="Chee G.-J."/>
            <person name="Nishi S."/>
            <person name="Shimamura S."/>
            <person name="Suzuki H."/>
            <person name="Matsui S."/>
            <person name="Uchiyama I."/>
        </authorList>
    </citation>
    <scope>NUCLEOTIDE SEQUENCE [LARGE SCALE GENOMIC DNA]</scope>
    <source>
        <strain>HTA426</strain>
    </source>
</reference>
<name>DEOB_GEOKA</name>
<keyword id="KW-0963">Cytoplasm</keyword>
<keyword id="KW-0413">Isomerase</keyword>
<keyword id="KW-0464">Manganese</keyword>
<keyword id="KW-0479">Metal-binding</keyword>
<keyword id="KW-1185">Reference proteome</keyword>
<protein>
    <recommendedName>
        <fullName evidence="1">Phosphopentomutase</fullName>
        <ecNumber evidence="1">5.4.2.7</ecNumber>
    </recommendedName>
    <alternativeName>
        <fullName evidence="1">Phosphodeoxyribomutase</fullName>
    </alternativeName>
</protein>
<comment type="function">
    <text evidence="1">Isomerase that catalyzes the conversion of deoxy-ribose 1-phosphate (dRib-1-P) and ribose 1-phosphate (Rib-1-P) to deoxy-ribose 5-phosphate (dRib-5-P) and ribose 5-phosphate (Rib-5-P), respectively.</text>
</comment>
<comment type="catalytic activity">
    <reaction evidence="1">
        <text>2-deoxy-alpha-D-ribose 1-phosphate = 2-deoxy-D-ribose 5-phosphate</text>
        <dbReference type="Rhea" id="RHEA:27658"/>
        <dbReference type="ChEBI" id="CHEBI:57259"/>
        <dbReference type="ChEBI" id="CHEBI:62877"/>
        <dbReference type="EC" id="5.4.2.7"/>
    </reaction>
</comment>
<comment type="catalytic activity">
    <reaction evidence="1">
        <text>alpha-D-ribose 1-phosphate = D-ribose 5-phosphate</text>
        <dbReference type="Rhea" id="RHEA:18793"/>
        <dbReference type="ChEBI" id="CHEBI:57720"/>
        <dbReference type="ChEBI" id="CHEBI:78346"/>
        <dbReference type="EC" id="5.4.2.7"/>
    </reaction>
</comment>
<comment type="cofactor">
    <cofactor evidence="1">
        <name>Mn(2+)</name>
        <dbReference type="ChEBI" id="CHEBI:29035"/>
    </cofactor>
    <text evidence="1">Binds 2 manganese ions.</text>
</comment>
<comment type="pathway">
    <text evidence="1">Carbohydrate degradation; 2-deoxy-D-ribose 1-phosphate degradation; D-glyceraldehyde 3-phosphate and acetaldehyde from 2-deoxy-alpha-D-ribose 1-phosphate: step 1/2.</text>
</comment>
<comment type="subcellular location">
    <subcellularLocation>
        <location evidence="1">Cytoplasm</location>
    </subcellularLocation>
</comment>
<comment type="similarity">
    <text evidence="1">Belongs to the phosphopentomutase family.</text>
</comment>
<gene>
    <name evidence="1" type="primary">deoB</name>
    <name type="ordered locus">GK2314</name>
</gene>
<sequence>MNVKTTYRRVFLIVMDSVGIGEAPDAEKYNDKGADTLGHIAEYRGGLYMPNMAKLGLSHIREIKGVPKVERPLAYYTKMKEASAGKDTMTGHWELMGLRIDKPFRVFPNGFPDELIAELERRTGRNVIGNKPASGTAIIEELGEEHMKTGAIIVYTSADSVLQIAAHEQVVPLDELYRICEIARELTRDEPYMVGRVIARPFIGKPGHFERTANRHDYALKPFGKTVMNELKDAGYEVIAIGKIADIYDNEGVTQSLRTTSNMDGMDKLVDTLGMDFTGLSFVNLVDFDAKYGHRRDPKGYGDALEEFDARLADVLPRLKEDDLLIITADHGNDPVHHGTDHTREYVPLLVYSPRFRGGKPLPVRETFADVGATIADNFQVNRPPYGTSFLADLA</sequence>
<organism>
    <name type="scientific">Geobacillus kaustophilus (strain HTA426)</name>
    <dbReference type="NCBI Taxonomy" id="235909"/>
    <lineage>
        <taxon>Bacteria</taxon>
        <taxon>Bacillati</taxon>
        <taxon>Bacillota</taxon>
        <taxon>Bacilli</taxon>
        <taxon>Bacillales</taxon>
        <taxon>Anoxybacillaceae</taxon>
        <taxon>Geobacillus</taxon>
        <taxon>Geobacillus thermoleovorans group</taxon>
    </lineage>
</organism>
<feature type="chain" id="PRO_0000258286" description="Phosphopentomutase">
    <location>
        <begin position="1"/>
        <end position="395"/>
    </location>
</feature>
<feature type="binding site" evidence="1">
    <location>
        <position position="16"/>
    </location>
    <ligand>
        <name>Mn(2+)</name>
        <dbReference type="ChEBI" id="CHEBI:29035"/>
        <label>1</label>
    </ligand>
</feature>
<feature type="binding site" evidence="1">
    <location>
        <position position="289"/>
    </location>
    <ligand>
        <name>Mn(2+)</name>
        <dbReference type="ChEBI" id="CHEBI:29035"/>
        <label>2</label>
    </ligand>
</feature>
<feature type="binding site" evidence="1">
    <location>
        <position position="294"/>
    </location>
    <ligand>
        <name>Mn(2+)</name>
        <dbReference type="ChEBI" id="CHEBI:29035"/>
        <label>2</label>
    </ligand>
</feature>
<feature type="binding site" evidence="1">
    <location>
        <position position="330"/>
    </location>
    <ligand>
        <name>Mn(2+)</name>
        <dbReference type="ChEBI" id="CHEBI:29035"/>
        <label>1</label>
    </ligand>
</feature>
<feature type="binding site" evidence="1">
    <location>
        <position position="331"/>
    </location>
    <ligand>
        <name>Mn(2+)</name>
        <dbReference type="ChEBI" id="CHEBI:29035"/>
        <label>1</label>
    </ligand>
</feature>
<feature type="binding site" evidence="1">
    <location>
        <position position="342"/>
    </location>
    <ligand>
        <name>Mn(2+)</name>
        <dbReference type="ChEBI" id="CHEBI:29035"/>
        <label>2</label>
    </ligand>
</feature>